<sequence length="301" mass="32734">MSSFGKVAVLFGGTSAEREVSLNSGSRVLAALQGQGIDAHAFDPAEQPLDALKGYDRAFIALHGRHGEDGTIQGALEVMHIPYTGSGVLASALAMDKFRTKLMWRAAGLAIPEYALLTADSDFADIEEELGLPLFVKPAREGSSIGVTKVKERGALKAAYEEAARHDPLVIAEKGVMGGEYTVGIIGDEAMPIIKIEPATEWYDYEAKYNRDDTRYLCPCGLPEAKEMEIRKGALEAFRILGGRGWGRVDFLMDEDGKYYFLEVNTAPGMTDHSLVPMAARVNGMDYPTLVRRVLELAAND</sequence>
<keyword id="KW-0067">ATP-binding</keyword>
<keyword id="KW-0133">Cell shape</keyword>
<keyword id="KW-0961">Cell wall biogenesis/degradation</keyword>
<keyword id="KW-0963">Cytoplasm</keyword>
<keyword id="KW-0436">Ligase</keyword>
<keyword id="KW-0460">Magnesium</keyword>
<keyword id="KW-0464">Manganese</keyword>
<keyword id="KW-0479">Metal-binding</keyword>
<keyword id="KW-0547">Nucleotide-binding</keyword>
<keyword id="KW-0573">Peptidoglycan synthesis</keyword>
<reference key="1">
    <citation type="journal article" date="2009" name="BMC Genomics">
        <title>Metabolic analysis of the soil microbe Dechloromonas aromatica str. RCB: indications of a surprisingly complex life-style and cryptic anaerobic pathways for aromatic degradation.</title>
        <authorList>
            <person name="Salinero K.K."/>
            <person name="Keller K."/>
            <person name="Feil W.S."/>
            <person name="Feil H."/>
            <person name="Trong S."/>
            <person name="Di Bartolo G."/>
            <person name="Lapidus A."/>
        </authorList>
    </citation>
    <scope>NUCLEOTIDE SEQUENCE [LARGE SCALE GENOMIC DNA]</scope>
    <source>
        <strain>RCB</strain>
    </source>
</reference>
<accession>Q47AA6</accession>
<dbReference type="EC" id="6.3.2.4" evidence="2"/>
<dbReference type="EMBL" id="CP000089">
    <property type="protein sequence ID" value="AAZ48225.1"/>
    <property type="molecule type" value="Genomic_DNA"/>
</dbReference>
<dbReference type="SMR" id="Q47AA6"/>
<dbReference type="STRING" id="159087.Daro_3496"/>
<dbReference type="KEGG" id="dar:Daro_3496"/>
<dbReference type="eggNOG" id="COG1181">
    <property type="taxonomic scope" value="Bacteria"/>
</dbReference>
<dbReference type="HOGENOM" id="CLU_039268_1_2_4"/>
<dbReference type="OrthoDB" id="9813261at2"/>
<dbReference type="UniPathway" id="UPA00219"/>
<dbReference type="GO" id="GO:0005829">
    <property type="term" value="C:cytosol"/>
    <property type="evidence" value="ECO:0007669"/>
    <property type="project" value="TreeGrafter"/>
</dbReference>
<dbReference type="GO" id="GO:0005524">
    <property type="term" value="F:ATP binding"/>
    <property type="evidence" value="ECO:0007669"/>
    <property type="project" value="UniProtKB-KW"/>
</dbReference>
<dbReference type="GO" id="GO:0008716">
    <property type="term" value="F:D-alanine-D-alanine ligase activity"/>
    <property type="evidence" value="ECO:0007669"/>
    <property type="project" value="UniProtKB-UniRule"/>
</dbReference>
<dbReference type="GO" id="GO:0046872">
    <property type="term" value="F:metal ion binding"/>
    <property type="evidence" value="ECO:0007669"/>
    <property type="project" value="UniProtKB-KW"/>
</dbReference>
<dbReference type="GO" id="GO:0071555">
    <property type="term" value="P:cell wall organization"/>
    <property type="evidence" value="ECO:0007669"/>
    <property type="project" value="UniProtKB-KW"/>
</dbReference>
<dbReference type="GO" id="GO:0009252">
    <property type="term" value="P:peptidoglycan biosynthetic process"/>
    <property type="evidence" value="ECO:0007669"/>
    <property type="project" value="UniProtKB-UniRule"/>
</dbReference>
<dbReference type="GO" id="GO:0008360">
    <property type="term" value="P:regulation of cell shape"/>
    <property type="evidence" value="ECO:0007669"/>
    <property type="project" value="UniProtKB-KW"/>
</dbReference>
<dbReference type="FunFam" id="3.30.1490.20:FF:000007">
    <property type="entry name" value="D-alanine--D-alanine ligase"/>
    <property type="match status" value="1"/>
</dbReference>
<dbReference type="FunFam" id="3.30.470.20:FF:000008">
    <property type="entry name" value="D-alanine--D-alanine ligase"/>
    <property type="match status" value="1"/>
</dbReference>
<dbReference type="FunFam" id="3.40.50.20:FF:000013">
    <property type="entry name" value="D-alanine--D-alanine ligase"/>
    <property type="match status" value="1"/>
</dbReference>
<dbReference type="Gene3D" id="3.40.50.20">
    <property type="match status" value="1"/>
</dbReference>
<dbReference type="Gene3D" id="3.30.1490.20">
    <property type="entry name" value="ATP-grasp fold, A domain"/>
    <property type="match status" value="1"/>
</dbReference>
<dbReference type="Gene3D" id="3.30.470.20">
    <property type="entry name" value="ATP-grasp fold, B domain"/>
    <property type="match status" value="1"/>
</dbReference>
<dbReference type="HAMAP" id="MF_00047">
    <property type="entry name" value="Dala_Dala_lig"/>
    <property type="match status" value="1"/>
</dbReference>
<dbReference type="InterPro" id="IPR011761">
    <property type="entry name" value="ATP-grasp"/>
</dbReference>
<dbReference type="InterPro" id="IPR013815">
    <property type="entry name" value="ATP_grasp_subdomain_1"/>
</dbReference>
<dbReference type="InterPro" id="IPR000291">
    <property type="entry name" value="D-Ala_lig_Van_CS"/>
</dbReference>
<dbReference type="InterPro" id="IPR005905">
    <property type="entry name" value="D_ala_D_ala"/>
</dbReference>
<dbReference type="InterPro" id="IPR011095">
    <property type="entry name" value="Dala_Dala_lig_C"/>
</dbReference>
<dbReference type="InterPro" id="IPR011127">
    <property type="entry name" value="Dala_Dala_lig_N"/>
</dbReference>
<dbReference type="InterPro" id="IPR016185">
    <property type="entry name" value="PreATP-grasp_dom_sf"/>
</dbReference>
<dbReference type="NCBIfam" id="TIGR01205">
    <property type="entry name" value="D_ala_D_alaTIGR"/>
    <property type="match status" value="1"/>
</dbReference>
<dbReference type="NCBIfam" id="NF002378">
    <property type="entry name" value="PRK01372.1"/>
    <property type="match status" value="1"/>
</dbReference>
<dbReference type="PANTHER" id="PTHR23132">
    <property type="entry name" value="D-ALANINE--D-ALANINE LIGASE"/>
    <property type="match status" value="1"/>
</dbReference>
<dbReference type="PANTHER" id="PTHR23132:SF23">
    <property type="entry name" value="D-ALANINE--D-ALANINE LIGASE B"/>
    <property type="match status" value="1"/>
</dbReference>
<dbReference type="Pfam" id="PF07478">
    <property type="entry name" value="Dala_Dala_lig_C"/>
    <property type="match status" value="1"/>
</dbReference>
<dbReference type="Pfam" id="PF01820">
    <property type="entry name" value="Dala_Dala_lig_N"/>
    <property type="match status" value="1"/>
</dbReference>
<dbReference type="PIRSF" id="PIRSF039102">
    <property type="entry name" value="Ddl/VanB"/>
    <property type="match status" value="1"/>
</dbReference>
<dbReference type="SUPFAM" id="SSF56059">
    <property type="entry name" value="Glutathione synthetase ATP-binding domain-like"/>
    <property type="match status" value="1"/>
</dbReference>
<dbReference type="SUPFAM" id="SSF52440">
    <property type="entry name" value="PreATP-grasp domain"/>
    <property type="match status" value="1"/>
</dbReference>
<dbReference type="PROSITE" id="PS50975">
    <property type="entry name" value="ATP_GRASP"/>
    <property type="match status" value="1"/>
</dbReference>
<dbReference type="PROSITE" id="PS00843">
    <property type="entry name" value="DALA_DALA_LIGASE_1"/>
    <property type="match status" value="1"/>
</dbReference>
<dbReference type="PROSITE" id="PS00844">
    <property type="entry name" value="DALA_DALA_LIGASE_2"/>
    <property type="match status" value="1"/>
</dbReference>
<protein>
    <recommendedName>
        <fullName evidence="2">D-alanine--D-alanine ligase</fullName>
        <ecNumber evidence="2">6.3.2.4</ecNumber>
    </recommendedName>
    <alternativeName>
        <fullName evidence="2">D-Ala-D-Ala ligase</fullName>
    </alternativeName>
    <alternativeName>
        <fullName evidence="2">D-alanylalanine synthetase</fullName>
    </alternativeName>
</protein>
<feature type="chain" id="PRO_1000074773" description="D-alanine--D-alanine ligase">
    <location>
        <begin position="1"/>
        <end position="301"/>
    </location>
</feature>
<feature type="domain" description="ATP-grasp" evidence="2">
    <location>
        <begin position="101"/>
        <end position="296"/>
    </location>
</feature>
<feature type="binding site" evidence="2">
    <location>
        <begin position="127"/>
        <end position="182"/>
    </location>
    <ligand>
        <name>ATP</name>
        <dbReference type="ChEBI" id="CHEBI:30616"/>
    </ligand>
</feature>
<feature type="binding site" evidence="2">
    <location>
        <position position="250"/>
    </location>
    <ligand>
        <name>Mg(2+)</name>
        <dbReference type="ChEBI" id="CHEBI:18420"/>
        <label>1</label>
    </ligand>
</feature>
<feature type="binding site" evidence="2">
    <location>
        <position position="263"/>
    </location>
    <ligand>
        <name>Mg(2+)</name>
        <dbReference type="ChEBI" id="CHEBI:18420"/>
        <label>1</label>
    </ligand>
</feature>
<feature type="binding site" evidence="2">
    <location>
        <position position="263"/>
    </location>
    <ligand>
        <name>Mg(2+)</name>
        <dbReference type="ChEBI" id="CHEBI:18420"/>
        <label>2</label>
    </ligand>
</feature>
<feature type="binding site" evidence="2">
    <location>
        <position position="265"/>
    </location>
    <ligand>
        <name>Mg(2+)</name>
        <dbReference type="ChEBI" id="CHEBI:18420"/>
        <label>2</label>
    </ligand>
</feature>
<name>DDL_DECAR</name>
<organism>
    <name type="scientific">Dechloromonas aromatica (strain RCB)</name>
    <dbReference type="NCBI Taxonomy" id="159087"/>
    <lineage>
        <taxon>Bacteria</taxon>
        <taxon>Pseudomonadati</taxon>
        <taxon>Pseudomonadota</taxon>
        <taxon>Betaproteobacteria</taxon>
        <taxon>Rhodocyclales</taxon>
        <taxon>Azonexaceae</taxon>
        <taxon>Dechloromonas</taxon>
    </lineage>
</organism>
<proteinExistence type="inferred from homology"/>
<gene>
    <name evidence="2" type="primary">ddl</name>
    <name type="ordered locus">Daro_3496</name>
</gene>
<evidence type="ECO:0000250" key="1"/>
<evidence type="ECO:0000255" key="2">
    <source>
        <dbReference type="HAMAP-Rule" id="MF_00047"/>
    </source>
</evidence>
<comment type="function">
    <text evidence="2">Cell wall formation.</text>
</comment>
<comment type="catalytic activity">
    <reaction evidence="2">
        <text>2 D-alanine + ATP = D-alanyl-D-alanine + ADP + phosphate + H(+)</text>
        <dbReference type="Rhea" id="RHEA:11224"/>
        <dbReference type="ChEBI" id="CHEBI:15378"/>
        <dbReference type="ChEBI" id="CHEBI:30616"/>
        <dbReference type="ChEBI" id="CHEBI:43474"/>
        <dbReference type="ChEBI" id="CHEBI:57416"/>
        <dbReference type="ChEBI" id="CHEBI:57822"/>
        <dbReference type="ChEBI" id="CHEBI:456216"/>
        <dbReference type="EC" id="6.3.2.4"/>
    </reaction>
</comment>
<comment type="cofactor">
    <cofactor evidence="1">
        <name>Mg(2+)</name>
        <dbReference type="ChEBI" id="CHEBI:18420"/>
    </cofactor>
    <cofactor evidence="1">
        <name>Mn(2+)</name>
        <dbReference type="ChEBI" id="CHEBI:29035"/>
    </cofactor>
    <text evidence="1">Binds 2 magnesium or manganese ions per subunit.</text>
</comment>
<comment type="pathway">
    <text evidence="2">Cell wall biogenesis; peptidoglycan biosynthesis.</text>
</comment>
<comment type="subcellular location">
    <subcellularLocation>
        <location evidence="2">Cytoplasm</location>
    </subcellularLocation>
</comment>
<comment type="similarity">
    <text evidence="2">Belongs to the D-alanine--D-alanine ligase family.</text>
</comment>